<protein>
    <recommendedName>
        <fullName evidence="11">Disintegrin and metalloproteinase domain-containing protein adm-2</fullName>
        <ecNumber evidence="1">3.4.24.-</ecNumber>
    </recommendedName>
</protein>
<gene>
    <name evidence="13" type="primary">adm-2</name>
    <name evidence="13" type="ORF">C04A11.4</name>
</gene>
<evidence type="ECO:0000250" key="1">
    <source>
        <dbReference type="UniProtKB" id="Q61072"/>
    </source>
</evidence>
<evidence type="ECO:0000250" key="2">
    <source>
        <dbReference type="UniProtKB" id="Q9BZ11"/>
    </source>
</evidence>
<evidence type="ECO:0000255" key="3"/>
<evidence type="ECO:0000255" key="4">
    <source>
        <dbReference type="PROSITE-ProRule" id="PRU00068"/>
    </source>
</evidence>
<evidence type="ECO:0000255" key="5">
    <source>
        <dbReference type="PROSITE-ProRule" id="PRU00076"/>
    </source>
</evidence>
<evidence type="ECO:0000255" key="6">
    <source>
        <dbReference type="PROSITE-ProRule" id="PRU00276"/>
    </source>
</evidence>
<evidence type="ECO:0000255" key="7">
    <source>
        <dbReference type="PROSITE-ProRule" id="PRU00498"/>
    </source>
</evidence>
<evidence type="ECO:0000256" key="8">
    <source>
        <dbReference type="SAM" id="MobiDB-lite"/>
    </source>
</evidence>
<evidence type="ECO:0000269" key="9">
    <source>
    </source>
</evidence>
<evidence type="ECO:0000303" key="10">
    <source>
    </source>
</evidence>
<evidence type="ECO:0000305" key="11"/>
<evidence type="ECO:0000312" key="12">
    <source>
        <dbReference type="Proteomes" id="UP000001940"/>
    </source>
</evidence>
<evidence type="ECO:0000312" key="13">
    <source>
        <dbReference type="WormBase" id="C04A11.4a"/>
    </source>
</evidence>
<evidence type="ECO:0000312" key="14">
    <source>
        <dbReference type="WormBase" id="C04A11.4b"/>
    </source>
</evidence>
<comment type="function">
    <text evidence="1 9">Metalloprotease that cleaves and releases a number of molecules (By similarity). Negative regulator of lrp-1 protein levels, potentially by influencing its endosomal trafficking (PubMed:35639786). Involved in regulating the molting process (PubMed:35639786).</text>
</comment>
<comment type="cofactor">
    <cofactor evidence="2">
        <name>Zn(2+)</name>
        <dbReference type="ChEBI" id="CHEBI:29105"/>
    </cofactor>
    <text evidence="2">Binds 1 zinc ion per subunit.</text>
</comment>
<comment type="subcellular location">
    <subcellularLocation>
        <location evidence="9">Cell membrane</location>
        <topology evidence="3">Single-pass membrane protein</topology>
    </subcellularLocation>
    <subcellularLocation>
        <location evidence="9">Endosome membrane</location>
        <topology evidence="3">Single-pass membrane protein</topology>
    </subcellularLocation>
    <subcellularLocation>
        <location evidence="9">Lysosome membrane</location>
        <topology evidence="3">Single-pass membrane protein</topology>
    </subcellularLocation>
    <text evidence="9">Localization and lysosomal targeting is influenced by components of the nekl-2/mlt-2/mlt-4 and nekl-3/mlt-3 complexes.</text>
</comment>
<comment type="alternative products">
    <event type="alternative splicing"/>
    <isoform>
        <id>G5EDW5-1</id>
        <name evidence="13">a</name>
        <sequence type="displayed"/>
    </isoform>
    <isoform>
        <id>G5EDW5-2</id>
        <name evidence="14">b</name>
        <sequence type="described" ref="VSP_061940 VSP_061941"/>
    </isoform>
</comment>
<comment type="tissue specificity">
    <text evidence="9">Expressed in hyp7 large epidermal syncytium (punctate distribution), seam cell syncytia, anterior epidermis, neurons located in the head, tail and central body, proximal oogenic cells (levels increasing in maturing oocytes) and myoepithelial cells of the spermatheca (at protein level) (PubMed:35639786). Not detected in mature sperm cells (PubMed:35639786).</text>
</comment>
<comment type="developmental stage">
    <text evidence="9">Expressed throughout embryogenesis.</text>
</comment>
<comment type="domain">
    <text evidence="9">The peptidase M12B domain does not require a conserved Zn-metalloprotease consensus motif to contribute to regulation of lrp-1 protein levels.</text>
</comment>
<comment type="disruption phenotype">
    <text evidence="9">RNAi-mediated knockdown leads to suppression of molting defects in a nekl-2(fd81);nekl-3(gk894345) double mutant background.</text>
</comment>
<keyword id="KW-0025">Alternative splicing</keyword>
<keyword id="KW-1003">Cell membrane</keyword>
<keyword id="KW-1015">Disulfide bond</keyword>
<keyword id="KW-0245">EGF-like domain</keyword>
<keyword id="KW-0967">Endosome</keyword>
<keyword id="KW-0325">Glycoprotein</keyword>
<keyword id="KW-0378">Hydrolase</keyword>
<keyword id="KW-0458">Lysosome</keyword>
<keyword id="KW-0472">Membrane</keyword>
<keyword id="KW-0479">Metal-binding</keyword>
<keyword id="KW-0482">Metalloprotease</keyword>
<keyword id="KW-0645">Protease</keyword>
<keyword id="KW-1185">Reference proteome</keyword>
<keyword id="KW-0812">Transmembrane</keyword>
<keyword id="KW-1133">Transmembrane helix</keyword>
<keyword id="KW-0862">Zinc</keyword>
<dbReference type="EC" id="3.4.24.-" evidence="1"/>
<dbReference type="EMBL" id="BX284606">
    <property type="protein sequence ID" value="CAB03832.1"/>
    <property type="molecule type" value="Genomic_DNA"/>
</dbReference>
<dbReference type="EMBL" id="BX284606">
    <property type="protein sequence ID" value="VAY52574.1"/>
    <property type="molecule type" value="Genomic_DNA"/>
</dbReference>
<dbReference type="PIR" id="T18900">
    <property type="entry name" value="T18900"/>
</dbReference>
<dbReference type="RefSeq" id="NP_001355451.1">
    <molecule id="G5EDW5-2"/>
    <property type="nucleotide sequence ID" value="NM_001368538.4"/>
</dbReference>
<dbReference type="RefSeq" id="NP_510291.1">
    <molecule id="G5EDW5-1"/>
    <property type="nucleotide sequence ID" value="NM_077890.6"/>
</dbReference>
<dbReference type="SMR" id="G5EDW5"/>
<dbReference type="FunCoup" id="G5EDW5">
    <property type="interactions" value="1217"/>
</dbReference>
<dbReference type="IntAct" id="G5EDW5">
    <property type="interactions" value="3"/>
</dbReference>
<dbReference type="STRING" id="6239.C04A11.4a.1"/>
<dbReference type="MEROPS" id="M12.A49"/>
<dbReference type="PaxDb" id="6239-C04A11.4"/>
<dbReference type="PeptideAtlas" id="G5EDW5"/>
<dbReference type="EnsemblMetazoa" id="C04A11.4a.1">
    <molecule id="G5EDW5-1"/>
    <property type="protein sequence ID" value="C04A11.4a.1"/>
    <property type="gene ID" value="WBGene00000074"/>
</dbReference>
<dbReference type="EnsemblMetazoa" id="C04A11.4b.1">
    <molecule id="G5EDW5-2"/>
    <property type="protein sequence ID" value="C04A11.4b.1"/>
    <property type="gene ID" value="WBGene00000074"/>
</dbReference>
<dbReference type="GeneID" id="181489"/>
<dbReference type="KEGG" id="cel:CELE_C04A11.4"/>
<dbReference type="AGR" id="WB:WBGene00000074"/>
<dbReference type="CTD" id="181489"/>
<dbReference type="WormBase" id="C04A11.4a">
    <molecule id="G5EDW5-1"/>
    <property type="protein sequence ID" value="CE07906"/>
    <property type="gene ID" value="WBGene00000074"/>
    <property type="gene designation" value="adm-2"/>
</dbReference>
<dbReference type="WormBase" id="C04A11.4b">
    <molecule id="G5EDW5-2"/>
    <property type="protein sequence ID" value="CE52805"/>
    <property type="gene ID" value="WBGene00000074"/>
    <property type="gene designation" value="adm-2"/>
</dbReference>
<dbReference type="eggNOG" id="KOG3607">
    <property type="taxonomic scope" value="Eukaryota"/>
</dbReference>
<dbReference type="HOGENOM" id="CLU_012714_2_0_1"/>
<dbReference type="InParanoid" id="G5EDW5"/>
<dbReference type="OMA" id="AYKGTMC"/>
<dbReference type="OrthoDB" id="5951731at2759"/>
<dbReference type="PhylomeDB" id="G5EDW5"/>
<dbReference type="Reactome" id="R-CEL-1474228">
    <property type="pathway name" value="Degradation of the extracellular matrix"/>
</dbReference>
<dbReference type="Reactome" id="R-CEL-6798695">
    <property type="pathway name" value="Neutrophil degranulation"/>
</dbReference>
<dbReference type="PRO" id="PR:G5EDW5"/>
<dbReference type="Proteomes" id="UP000001940">
    <property type="component" value="Chromosome X"/>
</dbReference>
<dbReference type="Bgee" id="WBGene00000074">
    <property type="expression patterns" value="Expressed in pharyngeal muscle cell (C elegans) and 3 other cell types or tissues"/>
</dbReference>
<dbReference type="ExpressionAtlas" id="G5EDW5">
    <property type="expression patterns" value="baseline and differential"/>
</dbReference>
<dbReference type="GO" id="GO:0010008">
    <property type="term" value="C:endosome membrane"/>
    <property type="evidence" value="ECO:0007669"/>
    <property type="project" value="UniProtKB-SubCell"/>
</dbReference>
<dbReference type="GO" id="GO:0005765">
    <property type="term" value="C:lysosomal membrane"/>
    <property type="evidence" value="ECO:0007669"/>
    <property type="project" value="UniProtKB-SubCell"/>
</dbReference>
<dbReference type="GO" id="GO:0005886">
    <property type="term" value="C:plasma membrane"/>
    <property type="evidence" value="ECO:0007669"/>
    <property type="project" value="UniProtKB-SubCell"/>
</dbReference>
<dbReference type="GO" id="GO:0046872">
    <property type="term" value="F:metal ion binding"/>
    <property type="evidence" value="ECO:0007669"/>
    <property type="project" value="UniProtKB-KW"/>
</dbReference>
<dbReference type="GO" id="GO:0004222">
    <property type="term" value="F:metalloendopeptidase activity"/>
    <property type="evidence" value="ECO:0000318"/>
    <property type="project" value="GO_Central"/>
</dbReference>
<dbReference type="GO" id="GO:0006509">
    <property type="term" value="P:membrane protein ectodomain proteolysis"/>
    <property type="evidence" value="ECO:0000318"/>
    <property type="project" value="GO_Central"/>
</dbReference>
<dbReference type="CDD" id="cd04269">
    <property type="entry name" value="ZnMc_adamalysin_II_like"/>
    <property type="match status" value="1"/>
</dbReference>
<dbReference type="FunFam" id="3.40.390.10:FF:000002">
    <property type="entry name" value="Disintegrin and metalloproteinase domain-containing protein 22"/>
    <property type="match status" value="1"/>
</dbReference>
<dbReference type="Gene3D" id="3.40.390.10">
    <property type="entry name" value="Collagenase (Catalytic Domain)"/>
    <property type="match status" value="1"/>
</dbReference>
<dbReference type="Gene3D" id="4.10.70.10">
    <property type="entry name" value="Disintegrin domain"/>
    <property type="match status" value="1"/>
</dbReference>
<dbReference type="InterPro" id="IPR006586">
    <property type="entry name" value="ADAM_Cys-rich"/>
</dbReference>
<dbReference type="InterPro" id="IPR001762">
    <property type="entry name" value="Disintegrin_dom"/>
</dbReference>
<dbReference type="InterPro" id="IPR036436">
    <property type="entry name" value="Disintegrin_dom_sf"/>
</dbReference>
<dbReference type="InterPro" id="IPR000742">
    <property type="entry name" value="EGF-like_dom"/>
</dbReference>
<dbReference type="InterPro" id="IPR024079">
    <property type="entry name" value="MetalloPept_cat_dom_sf"/>
</dbReference>
<dbReference type="InterPro" id="IPR001590">
    <property type="entry name" value="Peptidase_M12B"/>
</dbReference>
<dbReference type="InterPro" id="IPR034027">
    <property type="entry name" value="Reprolysin_adamalysin"/>
</dbReference>
<dbReference type="PANTHER" id="PTHR11905">
    <property type="entry name" value="ADAM A DISINTEGRIN AND METALLOPROTEASE DOMAIN"/>
    <property type="match status" value="1"/>
</dbReference>
<dbReference type="PANTHER" id="PTHR11905:SF159">
    <property type="entry name" value="ADAM METALLOPROTEASE"/>
    <property type="match status" value="1"/>
</dbReference>
<dbReference type="Pfam" id="PF08516">
    <property type="entry name" value="ADAM_CR"/>
    <property type="match status" value="1"/>
</dbReference>
<dbReference type="Pfam" id="PF00200">
    <property type="entry name" value="Disintegrin"/>
    <property type="match status" value="1"/>
</dbReference>
<dbReference type="Pfam" id="PF01421">
    <property type="entry name" value="Reprolysin"/>
    <property type="match status" value="1"/>
</dbReference>
<dbReference type="SMART" id="SM00608">
    <property type="entry name" value="ACR"/>
    <property type="match status" value="1"/>
</dbReference>
<dbReference type="SMART" id="SM00050">
    <property type="entry name" value="DISIN"/>
    <property type="match status" value="1"/>
</dbReference>
<dbReference type="SUPFAM" id="SSF57552">
    <property type="entry name" value="Blood coagulation inhibitor (disintegrin)"/>
    <property type="match status" value="1"/>
</dbReference>
<dbReference type="SUPFAM" id="SSF55486">
    <property type="entry name" value="Metalloproteases ('zincins'), catalytic domain"/>
    <property type="match status" value="1"/>
</dbReference>
<dbReference type="PROSITE" id="PS50215">
    <property type="entry name" value="ADAM_MEPRO"/>
    <property type="match status" value="1"/>
</dbReference>
<dbReference type="PROSITE" id="PS50214">
    <property type="entry name" value="DISINTEGRIN_2"/>
    <property type="match status" value="1"/>
</dbReference>
<dbReference type="PROSITE" id="PS00022">
    <property type="entry name" value="EGF_1"/>
    <property type="match status" value="1"/>
</dbReference>
<dbReference type="PROSITE" id="PS01186">
    <property type="entry name" value="EGF_2"/>
    <property type="match status" value="1"/>
</dbReference>
<dbReference type="PROSITE" id="PS50026">
    <property type="entry name" value="EGF_3"/>
    <property type="match status" value="1"/>
</dbReference>
<dbReference type="PROSITE" id="PS00142">
    <property type="entry name" value="ZINC_PROTEASE"/>
    <property type="match status" value="1"/>
</dbReference>
<proteinExistence type="evidence at protein level"/>
<name>ADM2_CAEEL</name>
<accession>G5EDW5</accession>
<accession>A0A3B1E9Z5</accession>
<feature type="chain" id="PRO_0000458351" description="Disintegrin and metalloproteinase domain-containing protein adm-2">
    <location>
        <begin position="1"/>
        <end position="952"/>
    </location>
</feature>
<feature type="topological domain" description="Extracellular" evidence="10">
    <location>
        <begin position="1"/>
        <end position="672"/>
    </location>
</feature>
<feature type="transmembrane region" description="Helical" evidence="3">
    <location>
        <begin position="673"/>
        <end position="693"/>
    </location>
</feature>
<feature type="topological domain" description="Cytoplasmic" evidence="10">
    <location>
        <begin position="694"/>
        <end position="952"/>
    </location>
</feature>
<feature type="domain" description="Peptidase M12B" evidence="6">
    <location>
        <begin position="177"/>
        <end position="373"/>
    </location>
</feature>
<feature type="domain" description="Disintegrin" evidence="4">
    <location>
        <begin position="379"/>
        <end position="466"/>
    </location>
</feature>
<feature type="domain" description="EGF-like" evidence="5">
    <location>
        <begin position="620"/>
        <end position="652"/>
    </location>
</feature>
<feature type="region of interest" description="Disordered" evidence="8">
    <location>
        <begin position="778"/>
        <end position="809"/>
    </location>
</feature>
<feature type="region of interest" description="Disordered" evidence="8">
    <location>
        <begin position="829"/>
        <end position="938"/>
    </location>
</feature>
<feature type="compositionally biased region" description="Basic and acidic residues" evidence="8">
    <location>
        <begin position="798"/>
        <end position="809"/>
    </location>
</feature>
<feature type="compositionally biased region" description="Basic and acidic residues" evidence="8">
    <location>
        <begin position="849"/>
        <end position="873"/>
    </location>
</feature>
<feature type="compositionally biased region" description="Pro residues" evidence="8">
    <location>
        <begin position="905"/>
        <end position="914"/>
    </location>
</feature>
<feature type="compositionally biased region" description="Basic and acidic residues" evidence="8">
    <location>
        <begin position="925"/>
        <end position="938"/>
    </location>
</feature>
<feature type="active site" evidence="6">
    <location>
        <position position="313"/>
    </location>
</feature>
<feature type="binding site" evidence="6">
    <location>
        <position position="312"/>
    </location>
    <ligand>
        <name>Zn(2+)</name>
        <dbReference type="ChEBI" id="CHEBI:29105"/>
        <note>catalytic</note>
    </ligand>
</feature>
<feature type="binding site" evidence="6">
    <location>
        <position position="316"/>
    </location>
    <ligand>
        <name>Zn(2+)</name>
        <dbReference type="ChEBI" id="CHEBI:29105"/>
        <note>catalytic</note>
    </ligand>
</feature>
<feature type="binding site" evidence="6">
    <location>
        <position position="322"/>
    </location>
    <ligand>
        <name>Zn(2+)</name>
        <dbReference type="ChEBI" id="CHEBI:29105"/>
        <note>catalytic</note>
    </ligand>
</feature>
<feature type="glycosylation site" description="N-linked (GlcNAc...) asparagine" evidence="7">
    <location>
        <position position="125"/>
    </location>
</feature>
<feature type="glycosylation site" description="N-linked (GlcNAc...) asparagine" evidence="7">
    <location>
        <position position="301"/>
    </location>
</feature>
<feature type="glycosylation site" description="N-linked (GlcNAc...) asparagine" evidence="7">
    <location>
        <position position="406"/>
    </location>
</feature>
<feature type="disulfide bond" evidence="6">
    <location>
        <begin position="287"/>
        <end position="368"/>
    </location>
</feature>
<feature type="disulfide bond" evidence="6">
    <location>
        <begin position="330"/>
        <end position="352"/>
    </location>
</feature>
<feature type="disulfide bond" evidence="6">
    <location>
        <begin position="332"/>
        <end position="337"/>
    </location>
</feature>
<feature type="disulfide bond" evidence="4">
    <location>
        <begin position="438"/>
        <end position="458"/>
    </location>
</feature>
<feature type="disulfide bond" evidence="5">
    <location>
        <begin position="624"/>
        <end position="634"/>
    </location>
</feature>
<feature type="disulfide bond" evidence="5">
    <location>
        <begin position="628"/>
        <end position="640"/>
    </location>
</feature>
<feature type="disulfide bond" evidence="5">
    <location>
        <begin position="642"/>
        <end position="651"/>
    </location>
</feature>
<feature type="splice variant" id="VSP_061940" description="In isoform b.">
    <original>KPTLPTKQPKVSED</original>
    <variation>ISETYTPYEATQSL</variation>
    <location>
        <begin position="916"/>
        <end position="929"/>
    </location>
</feature>
<feature type="splice variant" id="VSP_061941" description="In isoform b.">
    <location>
        <begin position="930"/>
        <end position="952"/>
    </location>
</feature>
<feature type="mutagenesis site" description="Results in strong suppression of molting defects in nekl-2(fd81);nekl-3(gk894345) mutants." evidence="9">
    <original>HELGHTFGMDH</original>
    <variation>DALAYTFRMDY</variation>
    <location>
        <begin position="312"/>
        <end position="322"/>
    </location>
</feature>
<feature type="mutagenesis site" description="In fd130; viable and no visible phenotype in wild type background. Suppression of molting defects in nekl-2(fd81);nekl-3(gk894345) double mutant background." evidence="9">
    <location>
        <begin position="494"/>
        <end position="952"/>
    </location>
</feature>
<reference evidence="12" key="1">
    <citation type="journal article" date="1998" name="Science">
        <title>Genome sequence of the nematode C. elegans: a platform for investigating biology.</title>
        <authorList>
            <consortium name="The C. elegans sequencing consortium"/>
        </authorList>
    </citation>
    <scope>NUCLEOTIDE SEQUENCE [LARGE SCALE GENOMIC DNA]</scope>
    <source>
        <strain evidence="12">Bristol N2</strain>
    </source>
</reference>
<reference evidence="11" key="2">
    <citation type="journal article" date="2022" name="PLoS Genet.">
        <title>An unexpected role for the conserved ADAM-family metalloprotease ADM-2 in Caenorhabditis elegans molting.</title>
        <authorList>
            <person name="Joseph B.B."/>
            <person name="Edeen P.T."/>
            <person name="Meadows S."/>
            <person name="Binti S."/>
            <person name="Fay D.S."/>
        </authorList>
    </citation>
    <scope>FUNCTION</scope>
    <scope>SUBCELLULAR LOCATION</scope>
    <scope>TISSUE SPECIFICITY</scope>
    <scope>DEVELOPMENTAL STAGE</scope>
    <scope>DOMAIN</scope>
    <scope>DISRUPTION PHENOTYPE</scope>
    <scope>MUTAGENESIS OF 312-HIS--HIS-322 AND 494-TRP--LYS-952</scope>
</reference>
<organism evidence="12">
    <name type="scientific">Caenorhabditis elegans</name>
    <dbReference type="NCBI Taxonomy" id="6239"/>
    <lineage>
        <taxon>Eukaryota</taxon>
        <taxon>Metazoa</taxon>
        <taxon>Ecdysozoa</taxon>
        <taxon>Nematoda</taxon>
        <taxon>Chromadorea</taxon>
        <taxon>Rhabditida</taxon>
        <taxon>Rhabditina</taxon>
        <taxon>Rhabditomorpha</taxon>
        <taxon>Rhabditoidea</taxon>
        <taxon>Rhabditidae</taxon>
        <taxon>Peloderinae</taxon>
        <taxon>Caenorhabditis</taxon>
    </lineage>
</organism>
<sequence length="952" mass="105557">MTDTLDLKLSSRRQWNPVRCPVRLEVDGSAQTPTSLVQTALNNPSFDLVIAAPNGQNVYIPFTEDRKLFTANIADDPSTSSLISHCHFEGVTEDGRHALSLCDPGEITGLLMTQTNRFGLSTSNNGSFVLIPYVENNCDLGSLVHSSSRKKRQIGKQNTVIDRNPSYIREHLDGRKRFVELALVADYSVYTKYDSDEKKVNDYMQQTMNILNSLYFPLNIRITLVHSEIWKKGDQISVIPDSKETLNNFMEYKKIMLKDHFFDTGYLMTTLKFDEGVVGKAYKGTMCSYDYSGGIYVDHNNDTVETVATFAHELGHTFGMDHDPNDKDVCYCPMPRCIMNPQSGHMEVWSECSVKNLASGFNRGIDLCLFNEPGKKPSDAKCGNGIVEPGEECDCGPLKCDNHCCNGSTCKLIGEAECASGDCCDLKTCKPKPRATVCRAAIGICDLDEYCNGETNDCPADFFVQNAALCPGKENEFCYEGGCGSRNDQCAKLWGPTGKNGDENCYRKNTEGTFHGNCGTNAHTKEIKKCETENAKCGLLQCETQAERPVFGDPGSVTFSHSTVYSSLKRDDKKFCYVFKSAYGGLNAPDPGLVPDGAICGEEQMCIGQKCHKKEKISKVTAQCLDNCNFRGVCNNVGNCHCERGFGGIACEIPGYGGSVNSNEAYRFRGITLSSTFLVFFCLFGIFIGGLCVYYRVKRKRNLVSEWWSVVKKKFDLHGDLVPVRKAPPPPYAQRIRQSFTAMWGEDHSHVAVAQPAHPRNCYNSCCRQPPRFDPPSIPMVTLKNPNLASPTPLLNPAEKEEQNQERATHQHVELYPVAESFRSDSAASFNTRTGSFRPNVQPPPVPRPSDDVLSKLNEDLAKEKNAKFDRLNKTLPLPPPLPKEKPKTASSTSLRRNESIRPEQAPPPPPPAHAKPTLPTKQPKVSEDAAATEEKVDVRSMAAIFDQKLKK</sequence>